<keyword id="KW-0963">Cytoplasm</keyword>
<keyword id="KW-1185">Reference proteome</keyword>
<keyword id="KW-0804">Transcription</keyword>
<keyword id="KW-0805">Transcription regulation</keyword>
<gene>
    <name evidence="5" type="primary">Mcts2</name>
</gene>
<name>MCTS2_MOUSE</name>
<proteinExistence type="evidence at protein level"/>
<reference key="1">
    <citation type="journal article" date="2005" name="Science">
        <title>The transcriptional landscape of the mammalian genome.</title>
        <authorList>
            <person name="Carninci P."/>
            <person name="Kasukawa T."/>
            <person name="Katayama S."/>
            <person name="Gough J."/>
            <person name="Frith M.C."/>
            <person name="Maeda N."/>
            <person name="Oyama R."/>
            <person name="Ravasi T."/>
            <person name="Lenhard B."/>
            <person name="Wells C."/>
            <person name="Kodzius R."/>
            <person name="Shimokawa K."/>
            <person name="Bajic V.B."/>
            <person name="Brenner S.E."/>
            <person name="Batalov S."/>
            <person name="Forrest A.R."/>
            <person name="Zavolan M."/>
            <person name="Davis M.J."/>
            <person name="Wilming L.G."/>
            <person name="Aidinis V."/>
            <person name="Allen J.E."/>
            <person name="Ambesi-Impiombato A."/>
            <person name="Apweiler R."/>
            <person name="Aturaliya R.N."/>
            <person name="Bailey T.L."/>
            <person name="Bansal M."/>
            <person name="Baxter L."/>
            <person name="Beisel K.W."/>
            <person name="Bersano T."/>
            <person name="Bono H."/>
            <person name="Chalk A.M."/>
            <person name="Chiu K.P."/>
            <person name="Choudhary V."/>
            <person name="Christoffels A."/>
            <person name="Clutterbuck D.R."/>
            <person name="Crowe M.L."/>
            <person name="Dalla E."/>
            <person name="Dalrymple B.P."/>
            <person name="de Bono B."/>
            <person name="Della Gatta G."/>
            <person name="di Bernardo D."/>
            <person name="Down T."/>
            <person name="Engstrom P."/>
            <person name="Fagiolini M."/>
            <person name="Faulkner G."/>
            <person name="Fletcher C.F."/>
            <person name="Fukushima T."/>
            <person name="Furuno M."/>
            <person name="Futaki S."/>
            <person name="Gariboldi M."/>
            <person name="Georgii-Hemming P."/>
            <person name="Gingeras T.R."/>
            <person name="Gojobori T."/>
            <person name="Green R.E."/>
            <person name="Gustincich S."/>
            <person name="Harbers M."/>
            <person name="Hayashi Y."/>
            <person name="Hensch T.K."/>
            <person name="Hirokawa N."/>
            <person name="Hill D."/>
            <person name="Huminiecki L."/>
            <person name="Iacono M."/>
            <person name="Ikeo K."/>
            <person name="Iwama A."/>
            <person name="Ishikawa T."/>
            <person name="Jakt M."/>
            <person name="Kanapin A."/>
            <person name="Katoh M."/>
            <person name="Kawasawa Y."/>
            <person name="Kelso J."/>
            <person name="Kitamura H."/>
            <person name="Kitano H."/>
            <person name="Kollias G."/>
            <person name="Krishnan S.P."/>
            <person name="Kruger A."/>
            <person name="Kummerfeld S.K."/>
            <person name="Kurochkin I.V."/>
            <person name="Lareau L.F."/>
            <person name="Lazarevic D."/>
            <person name="Lipovich L."/>
            <person name="Liu J."/>
            <person name="Liuni S."/>
            <person name="McWilliam S."/>
            <person name="Madan Babu M."/>
            <person name="Madera M."/>
            <person name="Marchionni L."/>
            <person name="Matsuda H."/>
            <person name="Matsuzawa S."/>
            <person name="Miki H."/>
            <person name="Mignone F."/>
            <person name="Miyake S."/>
            <person name="Morris K."/>
            <person name="Mottagui-Tabar S."/>
            <person name="Mulder N."/>
            <person name="Nakano N."/>
            <person name="Nakauchi H."/>
            <person name="Ng P."/>
            <person name="Nilsson R."/>
            <person name="Nishiguchi S."/>
            <person name="Nishikawa S."/>
            <person name="Nori F."/>
            <person name="Ohara O."/>
            <person name="Okazaki Y."/>
            <person name="Orlando V."/>
            <person name="Pang K.C."/>
            <person name="Pavan W.J."/>
            <person name="Pavesi G."/>
            <person name="Pesole G."/>
            <person name="Petrovsky N."/>
            <person name="Piazza S."/>
            <person name="Reed J."/>
            <person name="Reid J.F."/>
            <person name="Ring B.Z."/>
            <person name="Ringwald M."/>
            <person name="Rost B."/>
            <person name="Ruan Y."/>
            <person name="Salzberg S.L."/>
            <person name="Sandelin A."/>
            <person name="Schneider C."/>
            <person name="Schoenbach C."/>
            <person name="Sekiguchi K."/>
            <person name="Semple C.A."/>
            <person name="Seno S."/>
            <person name="Sessa L."/>
            <person name="Sheng Y."/>
            <person name="Shibata Y."/>
            <person name="Shimada H."/>
            <person name="Shimada K."/>
            <person name="Silva D."/>
            <person name="Sinclair B."/>
            <person name="Sperling S."/>
            <person name="Stupka E."/>
            <person name="Sugiura K."/>
            <person name="Sultana R."/>
            <person name="Takenaka Y."/>
            <person name="Taki K."/>
            <person name="Tammoja K."/>
            <person name="Tan S.L."/>
            <person name="Tang S."/>
            <person name="Taylor M.S."/>
            <person name="Tegner J."/>
            <person name="Teichmann S.A."/>
            <person name="Ueda H.R."/>
            <person name="van Nimwegen E."/>
            <person name="Verardo R."/>
            <person name="Wei C.L."/>
            <person name="Yagi K."/>
            <person name="Yamanishi H."/>
            <person name="Zabarovsky E."/>
            <person name="Zhu S."/>
            <person name="Zimmer A."/>
            <person name="Hide W."/>
            <person name="Bult C."/>
            <person name="Grimmond S.M."/>
            <person name="Teasdale R.D."/>
            <person name="Liu E.T."/>
            <person name="Brusic V."/>
            <person name="Quackenbush J."/>
            <person name="Wahlestedt C."/>
            <person name="Mattick J.S."/>
            <person name="Hume D.A."/>
            <person name="Kai C."/>
            <person name="Sasaki D."/>
            <person name="Tomaru Y."/>
            <person name="Fukuda S."/>
            <person name="Kanamori-Katayama M."/>
            <person name="Suzuki M."/>
            <person name="Aoki J."/>
            <person name="Arakawa T."/>
            <person name="Iida J."/>
            <person name="Imamura K."/>
            <person name="Itoh M."/>
            <person name="Kato T."/>
            <person name="Kawaji H."/>
            <person name="Kawagashira N."/>
            <person name="Kawashima T."/>
            <person name="Kojima M."/>
            <person name="Kondo S."/>
            <person name="Konno H."/>
            <person name="Nakano K."/>
            <person name="Ninomiya N."/>
            <person name="Nishio T."/>
            <person name="Okada M."/>
            <person name="Plessy C."/>
            <person name="Shibata K."/>
            <person name="Shiraki T."/>
            <person name="Suzuki S."/>
            <person name="Tagami M."/>
            <person name="Waki K."/>
            <person name="Watahiki A."/>
            <person name="Okamura-Oho Y."/>
            <person name="Suzuki H."/>
            <person name="Kawai J."/>
            <person name="Hayashizaki Y."/>
        </authorList>
    </citation>
    <scope>NUCLEOTIDE SEQUENCE [LARGE SCALE MRNA]</scope>
    <source>
        <strain>C57BL/6J</strain>
        <tissue>Embryo</tissue>
        <tissue>Kidney</tissue>
    </source>
</reference>
<reference key="2">
    <citation type="journal article" date="2009" name="PLoS Biol.">
        <title>Lineage-specific biology revealed by a finished genome assembly of the mouse.</title>
        <authorList>
            <person name="Church D.M."/>
            <person name="Goodstadt L."/>
            <person name="Hillier L.W."/>
            <person name="Zody M.C."/>
            <person name="Goldstein S."/>
            <person name="She X."/>
            <person name="Bult C.J."/>
            <person name="Agarwala R."/>
            <person name="Cherry J.L."/>
            <person name="DiCuccio M."/>
            <person name="Hlavina W."/>
            <person name="Kapustin Y."/>
            <person name="Meric P."/>
            <person name="Maglott D."/>
            <person name="Birtle Z."/>
            <person name="Marques A.C."/>
            <person name="Graves T."/>
            <person name="Zhou S."/>
            <person name="Teague B."/>
            <person name="Potamousis K."/>
            <person name="Churas C."/>
            <person name="Place M."/>
            <person name="Herschleb J."/>
            <person name="Runnheim R."/>
            <person name="Forrest D."/>
            <person name="Amos-Landgraf J."/>
            <person name="Schwartz D.C."/>
            <person name="Cheng Z."/>
            <person name="Lindblad-Toh K."/>
            <person name="Eichler E.E."/>
            <person name="Ponting C.P."/>
        </authorList>
    </citation>
    <scope>NUCLEOTIDE SEQUENCE [LARGE SCALE GENOMIC DNA]</scope>
    <source>
        <strain>C57BL/6J</strain>
    </source>
</reference>
<reference key="3">
    <citation type="journal article" date="2004" name="Genome Res.">
        <title>The status, quality, and expansion of the NIH full-length cDNA project: the Mammalian Gene Collection (MGC).</title>
        <authorList>
            <consortium name="The MGC Project Team"/>
        </authorList>
    </citation>
    <scope>NUCLEOTIDE SEQUENCE [LARGE SCALE MRNA]</scope>
    <source>
        <tissue>Uterus</tissue>
    </source>
</reference>
<reference key="4">
    <citation type="journal article" date="2008" name="Gene Expr. Patterns">
        <title>The PcG gene Sfmbt2 is paternally expressed in extraembryonic tissues.</title>
        <authorList>
            <person name="Kuzmin A."/>
            <person name="Han Z."/>
            <person name="Golding M.C."/>
            <person name="Mann M.R."/>
            <person name="Latham K.E."/>
            <person name="Varmuza S."/>
        </authorList>
    </citation>
    <scope>IMPRINTING</scope>
    <scope>MISCELLANEOUS</scope>
</reference>
<reference key="5">
    <citation type="journal article" date="2010" name="Cell">
        <title>A tissue-specific atlas of mouse protein phosphorylation and expression.</title>
        <authorList>
            <person name="Huttlin E.L."/>
            <person name="Jedrychowski M.P."/>
            <person name="Elias J.E."/>
            <person name="Goswami T."/>
            <person name="Rad R."/>
            <person name="Beausoleil S.A."/>
            <person name="Villen J."/>
            <person name="Haas W."/>
            <person name="Sowa M.E."/>
            <person name="Gygi S.P."/>
        </authorList>
    </citation>
    <scope>IDENTIFICATION BY MASS SPECTROMETRY [LARGE SCALE ANALYSIS]</scope>
    <source>
        <tissue>Testis</tissue>
    </source>
</reference>
<dbReference type="EMBL" id="AK002563">
    <property type="protein sequence ID" value="BAB22189.1"/>
    <property type="molecule type" value="mRNA"/>
</dbReference>
<dbReference type="EMBL" id="AK010255">
    <property type="protein sequence ID" value="BAB26798.1"/>
    <property type="molecule type" value="mRNA"/>
</dbReference>
<dbReference type="EMBL" id="AK028001">
    <property type="protein sequence ID" value="BAC25695.1"/>
    <property type="molecule type" value="mRNA"/>
</dbReference>
<dbReference type="EMBL" id="AL845162">
    <property type="status" value="NOT_ANNOTATED_CDS"/>
    <property type="molecule type" value="Genomic_DNA"/>
</dbReference>
<dbReference type="EMBL" id="BC027507">
    <property type="protein sequence ID" value="AAH27507.1"/>
    <property type="molecule type" value="mRNA"/>
</dbReference>
<dbReference type="CCDS" id="CCDS38281.1"/>
<dbReference type="RefSeq" id="NP_079819.1">
    <property type="nucleotide sequence ID" value="NM_025543.3"/>
</dbReference>
<dbReference type="SMR" id="Q9CQ21"/>
<dbReference type="BioGRID" id="211449">
    <property type="interactions" value="2"/>
</dbReference>
<dbReference type="FunCoup" id="Q9CQ21">
    <property type="interactions" value="939"/>
</dbReference>
<dbReference type="IntAct" id="Q9CQ21">
    <property type="interactions" value="1"/>
</dbReference>
<dbReference type="MINT" id="Q9CQ21"/>
<dbReference type="STRING" id="10090.ENSMUSP00000100534"/>
<dbReference type="SwissPalm" id="Q9CQ21"/>
<dbReference type="jPOST" id="Q9CQ21"/>
<dbReference type="PaxDb" id="10090-ENSMUSP00000100534"/>
<dbReference type="PeptideAtlas" id="Q9CQ21"/>
<dbReference type="ProteomicsDB" id="292202"/>
<dbReference type="Pumba" id="Q9CQ21"/>
<dbReference type="DNASU" id="66405"/>
<dbReference type="Ensembl" id="ENSMUST00000062148.9">
    <property type="protein sequence ID" value="ENSMUSP00000100534.3"/>
    <property type="gene ID" value="ENSMUSG00000042814.9"/>
</dbReference>
<dbReference type="GeneID" id="66405"/>
<dbReference type="KEGG" id="mmu:66405"/>
<dbReference type="UCSC" id="uc008nge.1">
    <property type="organism name" value="mouse"/>
</dbReference>
<dbReference type="AGR" id="MGI:1913655"/>
<dbReference type="CTD" id="100101490"/>
<dbReference type="MGI" id="MGI:1913655">
    <property type="gene designation" value="Mcts2"/>
</dbReference>
<dbReference type="VEuPathDB" id="HostDB:ENSMUSG00000042814"/>
<dbReference type="eggNOG" id="KOG2523">
    <property type="taxonomic scope" value="Eukaryota"/>
</dbReference>
<dbReference type="GeneTree" id="ENSGT00550000074964"/>
<dbReference type="HOGENOM" id="CLU_090468_0_1_1"/>
<dbReference type="InParanoid" id="Q9CQ21"/>
<dbReference type="OMA" id="PNIMQRF"/>
<dbReference type="OrthoDB" id="10249667at2759"/>
<dbReference type="PhylomeDB" id="Q9CQ21"/>
<dbReference type="TreeFam" id="TF315123"/>
<dbReference type="BioGRID-ORCS" id="66405">
    <property type="hits" value="4 hits in 79 CRISPR screens"/>
</dbReference>
<dbReference type="PRO" id="PR:Q9CQ21"/>
<dbReference type="Proteomes" id="UP000000589">
    <property type="component" value="Chromosome 2"/>
</dbReference>
<dbReference type="RNAct" id="Q9CQ21">
    <property type="molecule type" value="protein"/>
</dbReference>
<dbReference type="Bgee" id="ENSMUSG00000042814">
    <property type="expression patterns" value="Expressed in floor plate of midbrain and 247 other cell types or tissues"/>
</dbReference>
<dbReference type="GO" id="GO:0005737">
    <property type="term" value="C:cytoplasm"/>
    <property type="evidence" value="ECO:0007669"/>
    <property type="project" value="UniProtKB-SubCell"/>
</dbReference>
<dbReference type="GO" id="GO:0003723">
    <property type="term" value="F:RNA binding"/>
    <property type="evidence" value="ECO:0007669"/>
    <property type="project" value="InterPro"/>
</dbReference>
<dbReference type="CDD" id="cd11609">
    <property type="entry name" value="MCT1_N"/>
    <property type="match status" value="1"/>
</dbReference>
<dbReference type="CDD" id="cd21155">
    <property type="entry name" value="PUA_MCTS-1-like"/>
    <property type="match status" value="1"/>
</dbReference>
<dbReference type="FunFam" id="3.10.400.20:FF:000001">
    <property type="entry name" value="Malignant T-cell-amplified sequence 1"/>
    <property type="match status" value="1"/>
</dbReference>
<dbReference type="Gene3D" id="3.10.400.20">
    <property type="match status" value="1"/>
</dbReference>
<dbReference type="InterPro" id="IPR016437">
    <property type="entry name" value="MCT-1/Tma20"/>
</dbReference>
<dbReference type="InterPro" id="IPR041366">
    <property type="entry name" value="Pre-PUA"/>
</dbReference>
<dbReference type="InterPro" id="IPR002478">
    <property type="entry name" value="PUA"/>
</dbReference>
<dbReference type="InterPro" id="IPR015947">
    <property type="entry name" value="PUA-like_sf"/>
</dbReference>
<dbReference type="InterPro" id="IPR004521">
    <property type="entry name" value="Uncharacterised_CHP00451"/>
</dbReference>
<dbReference type="NCBIfam" id="TIGR00451">
    <property type="entry name" value="unchar_dom_2"/>
    <property type="match status" value="1"/>
</dbReference>
<dbReference type="PANTHER" id="PTHR22798:SF11">
    <property type="entry name" value="MALIGNANT T-CELL-AMPLIFIED SEQUENCE 2"/>
    <property type="match status" value="1"/>
</dbReference>
<dbReference type="PANTHER" id="PTHR22798">
    <property type="entry name" value="MCT-1 PROTEIN"/>
    <property type="match status" value="1"/>
</dbReference>
<dbReference type="Pfam" id="PF17832">
    <property type="entry name" value="Pre-PUA"/>
    <property type="match status" value="1"/>
</dbReference>
<dbReference type="Pfam" id="PF01472">
    <property type="entry name" value="PUA"/>
    <property type="match status" value="1"/>
</dbReference>
<dbReference type="PIRSF" id="PIRSF005067">
    <property type="entry name" value="Tma_RNA-bind_prd"/>
    <property type="match status" value="1"/>
</dbReference>
<dbReference type="SMART" id="SM00359">
    <property type="entry name" value="PUA"/>
    <property type="match status" value="1"/>
</dbReference>
<dbReference type="SUPFAM" id="SSF88697">
    <property type="entry name" value="PUA domain-like"/>
    <property type="match status" value="1"/>
</dbReference>
<dbReference type="PROSITE" id="PS50890">
    <property type="entry name" value="PUA"/>
    <property type="match status" value="1"/>
</dbReference>
<comment type="subcellular location">
    <subcellularLocation>
        <location evidence="1">Cytoplasm</location>
    </subcellularLocation>
</comment>
<comment type="miscellaneous">
    <text evidence="4">Imprinted gene expressed from the paternal allele in blastocysts.</text>
</comment>
<comment type="similarity">
    <text evidence="3">Belongs to the MCTS1 family.</text>
</comment>
<organism>
    <name type="scientific">Mus musculus</name>
    <name type="common">Mouse</name>
    <dbReference type="NCBI Taxonomy" id="10090"/>
    <lineage>
        <taxon>Eukaryota</taxon>
        <taxon>Metazoa</taxon>
        <taxon>Chordata</taxon>
        <taxon>Craniata</taxon>
        <taxon>Vertebrata</taxon>
        <taxon>Euteleostomi</taxon>
        <taxon>Mammalia</taxon>
        <taxon>Eutheria</taxon>
        <taxon>Euarchontoglires</taxon>
        <taxon>Glires</taxon>
        <taxon>Rodentia</taxon>
        <taxon>Myomorpha</taxon>
        <taxon>Muroidea</taxon>
        <taxon>Muridae</taxon>
        <taxon>Murinae</taxon>
        <taxon>Mus</taxon>
        <taxon>Mus</taxon>
    </lineage>
</organism>
<feature type="chain" id="PRO_0000344788" description="Malignant T-cell-amplified sequence 2">
    <location>
        <begin position="1"/>
        <end position="181"/>
    </location>
</feature>
<feature type="domain" description="PUA" evidence="2">
    <location>
        <begin position="92"/>
        <end position="171"/>
    </location>
</feature>
<accession>Q9CQ21</accession>
<sequence length="181" mass="20437">MFKKFDEKESVSNCIQLKTSVIKGIKSQLTEQFPGIEPWLNQIMPKKDPVKIVRCHEHMEILTVNGELLFFRQRKGPFYPTLRLLHKYPFILPHQQVDKGAIKFVLSGANIMCPGLTSPGAKLYTAAVDTIVAVMAEGKEHALCVGVMKMAAADIEKINKGIGIENIHYLNDGLWHMKTYK</sequence>
<protein>
    <recommendedName>
        <fullName evidence="3">Malignant T-cell-amplified sequence 2</fullName>
        <shortName>MCT-2</shortName>
    </recommendedName>
    <alternativeName>
        <fullName>Multiple copies T-cell malignancies 2</fullName>
    </alternativeName>
</protein>
<evidence type="ECO:0000250" key="1">
    <source>
        <dbReference type="UniProtKB" id="Q9ULC4"/>
    </source>
</evidence>
<evidence type="ECO:0000255" key="2">
    <source>
        <dbReference type="PROSITE-ProRule" id="PRU00161"/>
    </source>
</evidence>
<evidence type="ECO:0000305" key="3"/>
<evidence type="ECO:0000305" key="4">
    <source>
    </source>
</evidence>
<evidence type="ECO:0000312" key="5">
    <source>
        <dbReference type="MGI" id="MGI:1913655"/>
    </source>
</evidence>